<protein>
    <recommendedName>
        <fullName evidence="1">Phosphate import ATP-binding protein PstB 2</fullName>
        <ecNumber evidence="1">7.3.2.1</ecNumber>
    </recommendedName>
    <alternativeName>
        <fullName evidence="1">ABC phosphate transporter 2</fullName>
    </alternativeName>
    <alternativeName>
        <fullName evidence="1">Phosphate-transporting ATPase 2</fullName>
    </alternativeName>
</protein>
<evidence type="ECO:0000255" key="1">
    <source>
        <dbReference type="HAMAP-Rule" id="MF_01702"/>
    </source>
</evidence>
<organism>
    <name type="scientific">Caldanaerobacter subterraneus subsp. tengcongensis (strain DSM 15242 / JCM 11007 / NBRC 100824 / MB4)</name>
    <name type="common">Thermoanaerobacter tengcongensis</name>
    <dbReference type="NCBI Taxonomy" id="273068"/>
    <lineage>
        <taxon>Bacteria</taxon>
        <taxon>Bacillati</taxon>
        <taxon>Bacillota</taxon>
        <taxon>Clostridia</taxon>
        <taxon>Thermoanaerobacterales</taxon>
        <taxon>Thermoanaerobacteraceae</taxon>
        <taxon>Caldanaerobacter</taxon>
    </lineage>
</organism>
<reference key="1">
    <citation type="journal article" date="2002" name="Genome Res.">
        <title>A complete sequence of the T. tengcongensis genome.</title>
        <authorList>
            <person name="Bao Q."/>
            <person name="Tian Y."/>
            <person name="Li W."/>
            <person name="Xu Z."/>
            <person name="Xuan Z."/>
            <person name="Hu S."/>
            <person name="Dong W."/>
            <person name="Yang J."/>
            <person name="Chen Y."/>
            <person name="Xue Y."/>
            <person name="Xu Y."/>
            <person name="Lai X."/>
            <person name="Huang L."/>
            <person name="Dong X."/>
            <person name="Ma Y."/>
            <person name="Ling L."/>
            <person name="Tan H."/>
            <person name="Chen R."/>
            <person name="Wang J."/>
            <person name="Yu J."/>
            <person name="Yang H."/>
        </authorList>
    </citation>
    <scope>NUCLEOTIDE SEQUENCE [LARGE SCALE GENOMIC DNA]</scope>
    <source>
        <strain>DSM 15242 / JCM 11007 / NBRC 100824 / MB4</strain>
    </source>
</reference>
<dbReference type="EC" id="7.3.2.1" evidence="1"/>
<dbReference type="EMBL" id="AE008691">
    <property type="protein sequence ID" value="AAM24830.1"/>
    <property type="molecule type" value="Genomic_DNA"/>
</dbReference>
<dbReference type="SMR" id="Q8R9I2"/>
<dbReference type="STRING" id="273068.TTE1628"/>
<dbReference type="KEGG" id="tte:TTE1628"/>
<dbReference type="eggNOG" id="COG1117">
    <property type="taxonomic scope" value="Bacteria"/>
</dbReference>
<dbReference type="HOGENOM" id="CLU_000604_1_22_9"/>
<dbReference type="OrthoDB" id="9802264at2"/>
<dbReference type="Proteomes" id="UP000000555">
    <property type="component" value="Chromosome"/>
</dbReference>
<dbReference type="GO" id="GO:0005886">
    <property type="term" value="C:plasma membrane"/>
    <property type="evidence" value="ECO:0007669"/>
    <property type="project" value="UniProtKB-SubCell"/>
</dbReference>
<dbReference type="GO" id="GO:0005524">
    <property type="term" value="F:ATP binding"/>
    <property type="evidence" value="ECO:0007669"/>
    <property type="project" value="UniProtKB-KW"/>
</dbReference>
<dbReference type="GO" id="GO:0016887">
    <property type="term" value="F:ATP hydrolysis activity"/>
    <property type="evidence" value="ECO:0007669"/>
    <property type="project" value="InterPro"/>
</dbReference>
<dbReference type="GO" id="GO:0015415">
    <property type="term" value="F:ATPase-coupled phosphate ion transmembrane transporter activity"/>
    <property type="evidence" value="ECO:0007669"/>
    <property type="project" value="UniProtKB-EC"/>
</dbReference>
<dbReference type="GO" id="GO:0035435">
    <property type="term" value="P:phosphate ion transmembrane transport"/>
    <property type="evidence" value="ECO:0007669"/>
    <property type="project" value="InterPro"/>
</dbReference>
<dbReference type="CDD" id="cd03260">
    <property type="entry name" value="ABC_PstB_phosphate_transporter"/>
    <property type="match status" value="1"/>
</dbReference>
<dbReference type="FunFam" id="3.40.50.300:FF:000132">
    <property type="entry name" value="Phosphate import ATP-binding protein PstB"/>
    <property type="match status" value="1"/>
</dbReference>
<dbReference type="Gene3D" id="3.40.50.300">
    <property type="entry name" value="P-loop containing nucleotide triphosphate hydrolases"/>
    <property type="match status" value="1"/>
</dbReference>
<dbReference type="InterPro" id="IPR003593">
    <property type="entry name" value="AAA+_ATPase"/>
</dbReference>
<dbReference type="InterPro" id="IPR003439">
    <property type="entry name" value="ABC_transporter-like_ATP-bd"/>
</dbReference>
<dbReference type="InterPro" id="IPR017871">
    <property type="entry name" value="ABC_transporter-like_CS"/>
</dbReference>
<dbReference type="InterPro" id="IPR027417">
    <property type="entry name" value="P-loop_NTPase"/>
</dbReference>
<dbReference type="InterPro" id="IPR005670">
    <property type="entry name" value="PstB-like"/>
</dbReference>
<dbReference type="NCBIfam" id="TIGR00972">
    <property type="entry name" value="3a0107s01c2"/>
    <property type="match status" value="1"/>
</dbReference>
<dbReference type="PANTHER" id="PTHR43423">
    <property type="entry name" value="ABC TRANSPORTER I FAMILY MEMBER 17"/>
    <property type="match status" value="1"/>
</dbReference>
<dbReference type="PANTHER" id="PTHR43423:SF1">
    <property type="entry name" value="ABC TRANSPORTER I FAMILY MEMBER 17"/>
    <property type="match status" value="1"/>
</dbReference>
<dbReference type="Pfam" id="PF00005">
    <property type="entry name" value="ABC_tran"/>
    <property type="match status" value="1"/>
</dbReference>
<dbReference type="SMART" id="SM00382">
    <property type="entry name" value="AAA"/>
    <property type="match status" value="1"/>
</dbReference>
<dbReference type="SUPFAM" id="SSF52540">
    <property type="entry name" value="P-loop containing nucleoside triphosphate hydrolases"/>
    <property type="match status" value="1"/>
</dbReference>
<dbReference type="PROSITE" id="PS00211">
    <property type="entry name" value="ABC_TRANSPORTER_1"/>
    <property type="match status" value="1"/>
</dbReference>
<dbReference type="PROSITE" id="PS50893">
    <property type="entry name" value="ABC_TRANSPORTER_2"/>
    <property type="match status" value="1"/>
</dbReference>
<dbReference type="PROSITE" id="PS51238">
    <property type="entry name" value="PSTB"/>
    <property type="match status" value="1"/>
</dbReference>
<name>PSTB2_CALS4</name>
<gene>
    <name evidence="1" type="primary">pstB2</name>
    <name type="ordered locus">TTE1628</name>
</gene>
<keyword id="KW-0067">ATP-binding</keyword>
<keyword id="KW-1003">Cell membrane</keyword>
<keyword id="KW-0472">Membrane</keyword>
<keyword id="KW-0547">Nucleotide-binding</keyword>
<keyword id="KW-0592">Phosphate transport</keyword>
<keyword id="KW-1185">Reference proteome</keyword>
<keyword id="KW-1278">Translocase</keyword>
<keyword id="KW-0813">Transport</keyword>
<sequence length="249" mass="28184">MKKIEVRDLDLFYGEVQALKKINLDVEPNSVLALIGPSGCGKSTFIRTLNRMNDLIEGVKISGTVLLDGKDIYKEVDVIELRKKVGMVFQKPNPFPMTVYDNVAYGPRIHGIRDKRTLNEIVEKSLKAAALWDEVKDRLHHSALSLSGGQQQRLCIARTLAVEPEVILMDEPTSALDPISTMKIEELIEELKKKYTIIIVTHNMQQAGRVSDYTAFFLNGELVEWGPTDQVFYNPKDKRTEDYITGRFG</sequence>
<feature type="chain" id="PRO_0000092921" description="Phosphate import ATP-binding protein PstB 2">
    <location>
        <begin position="1"/>
        <end position="249"/>
    </location>
</feature>
<feature type="domain" description="ABC transporter" evidence="1">
    <location>
        <begin position="4"/>
        <end position="244"/>
    </location>
</feature>
<feature type="binding site" evidence="1">
    <location>
        <begin position="36"/>
        <end position="43"/>
    </location>
    <ligand>
        <name>ATP</name>
        <dbReference type="ChEBI" id="CHEBI:30616"/>
    </ligand>
</feature>
<proteinExistence type="inferred from homology"/>
<comment type="function">
    <text evidence="1">Part of the ABC transporter complex PstSACB involved in phosphate import. Responsible for energy coupling to the transport system.</text>
</comment>
<comment type="catalytic activity">
    <reaction evidence="1">
        <text>phosphate(out) + ATP + H2O = ADP + 2 phosphate(in) + H(+)</text>
        <dbReference type="Rhea" id="RHEA:24440"/>
        <dbReference type="ChEBI" id="CHEBI:15377"/>
        <dbReference type="ChEBI" id="CHEBI:15378"/>
        <dbReference type="ChEBI" id="CHEBI:30616"/>
        <dbReference type="ChEBI" id="CHEBI:43474"/>
        <dbReference type="ChEBI" id="CHEBI:456216"/>
        <dbReference type="EC" id="7.3.2.1"/>
    </reaction>
</comment>
<comment type="subunit">
    <text evidence="1">The complex is composed of two ATP-binding proteins (PstB), two transmembrane proteins (PstC and PstA) and a solute-binding protein (PstS).</text>
</comment>
<comment type="subcellular location">
    <subcellularLocation>
        <location evidence="1">Cell membrane</location>
        <topology evidence="1">Peripheral membrane protein</topology>
    </subcellularLocation>
</comment>
<comment type="similarity">
    <text evidence="1">Belongs to the ABC transporter superfamily. Phosphate importer (TC 3.A.1.7) family.</text>
</comment>
<accession>Q8R9I2</accession>